<reference key="1">
    <citation type="journal article" date="2004" name="Genome Res.">
        <title>The genome sequence of Mycoplasma mycoides subsp. mycoides SC type strain PG1T, the causative agent of contagious bovine pleuropneumonia (CBPP).</title>
        <authorList>
            <person name="Westberg J."/>
            <person name="Persson A."/>
            <person name="Holmberg A."/>
            <person name="Goesmann A."/>
            <person name="Lundeberg J."/>
            <person name="Johansson K.-E."/>
            <person name="Pettersson B."/>
            <person name="Uhlen M."/>
        </authorList>
    </citation>
    <scope>NUCLEOTIDE SEQUENCE [LARGE SCALE GENOMIC DNA]</scope>
    <source>
        <strain>CCUG 32753 / NCTC 10114 / PG1</strain>
    </source>
</reference>
<keyword id="KW-0240">DNA-directed RNA polymerase</keyword>
<keyword id="KW-0548">Nucleotidyltransferase</keyword>
<keyword id="KW-1185">Reference proteome</keyword>
<keyword id="KW-0804">Transcription</keyword>
<keyword id="KW-0808">Transferase</keyword>
<dbReference type="EC" id="2.7.7.6" evidence="1"/>
<dbReference type="EMBL" id="BX293980">
    <property type="protein sequence ID" value="CAE77339.1"/>
    <property type="molecule type" value="Genomic_DNA"/>
</dbReference>
<dbReference type="RefSeq" id="NP_975697.1">
    <property type="nucleotide sequence ID" value="NC_005364.2"/>
</dbReference>
<dbReference type="RefSeq" id="WP_011166890.1">
    <property type="nucleotide sequence ID" value="NC_005364.2"/>
</dbReference>
<dbReference type="SMR" id="Q6MSP9"/>
<dbReference type="STRING" id="272632.MSC_0721"/>
<dbReference type="KEGG" id="mmy:MSC_0721"/>
<dbReference type="PATRIC" id="fig|272632.4.peg.776"/>
<dbReference type="eggNOG" id="COG0202">
    <property type="taxonomic scope" value="Bacteria"/>
</dbReference>
<dbReference type="HOGENOM" id="CLU_053084_0_1_14"/>
<dbReference type="Proteomes" id="UP000001016">
    <property type="component" value="Chromosome"/>
</dbReference>
<dbReference type="GO" id="GO:0005737">
    <property type="term" value="C:cytoplasm"/>
    <property type="evidence" value="ECO:0007669"/>
    <property type="project" value="UniProtKB-ARBA"/>
</dbReference>
<dbReference type="GO" id="GO:0000428">
    <property type="term" value="C:DNA-directed RNA polymerase complex"/>
    <property type="evidence" value="ECO:0007669"/>
    <property type="project" value="UniProtKB-KW"/>
</dbReference>
<dbReference type="GO" id="GO:0003677">
    <property type="term" value="F:DNA binding"/>
    <property type="evidence" value="ECO:0007669"/>
    <property type="project" value="UniProtKB-UniRule"/>
</dbReference>
<dbReference type="GO" id="GO:0003899">
    <property type="term" value="F:DNA-directed RNA polymerase activity"/>
    <property type="evidence" value="ECO:0007669"/>
    <property type="project" value="UniProtKB-UniRule"/>
</dbReference>
<dbReference type="GO" id="GO:0046983">
    <property type="term" value="F:protein dimerization activity"/>
    <property type="evidence" value="ECO:0007669"/>
    <property type="project" value="InterPro"/>
</dbReference>
<dbReference type="GO" id="GO:0006351">
    <property type="term" value="P:DNA-templated transcription"/>
    <property type="evidence" value="ECO:0007669"/>
    <property type="project" value="UniProtKB-UniRule"/>
</dbReference>
<dbReference type="CDD" id="cd06928">
    <property type="entry name" value="RNAP_alpha_NTD"/>
    <property type="match status" value="1"/>
</dbReference>
<dbReference type="Gene3D" id="1.10.150.20">
    <property type="entry name" value="5' to 3' exonuclease, C-terminal subdomain"/>
    <property type="match status" value="1"/>
</dbReference>
<dbReference type="Gene3D" id="2.170.120.12">
    <property type="entry name" value="DNA-directed RNA polymerase, insert domain"/>
    <property type="match status" value="1"/>
</dbReference>
<dbReference type="Gene3D" id="3.30.1360.10">
    <property type="entry name" value="RNA polymerase, RBP11-like subunit"/>
    <property type="match status" value="1"/>
</dbReference>
<dbReference type="HAMAP" id="MF_00059">
    <property type="entry name" value="RNApol_bact_RpoA"/>
    <property type="match status" value="1"/>
</dbReference>
<dbReference type="InterPro" id="IPR011262">
    <property type="entry name" value="DNA-dir_RNA_pol_insert"/>
</dbReference>
<dbReference type="InterPro" id="IPR011263">
    <property type="entry name" value="DNA-dir_RNA_pol_RpoA/D/Rpb3"/>
</dbReference>
<dbReference type="InterPro" id="IPR011773">
    <property type="entry name" value="DNA-dir_RpoA"/>
</dbReference>
<dbReference type="InterPro" id="IPR036603">
    <property type="entry name" value="RBP11-like"/>
</dbReference>
<dbReference type="InterPro" id="IPR011260">
    <property type="entry name" value="RNAP_asu_C"/>
</dbReference>
<dbReference type="InterPro" id="IPR036643">
    <property type="entry name" value="RNApol_insert_sf"/>
</dbReference>
<dbReference type="NCBIfam" id="NF003513">
    <property type="entry name" value="PRK05182.1-2"/>
    <property type="match status" value="1"/>
</dbReference>
<dbReference type="NCBIfam" id="NF003519">
    <property type="entry name" value="PRK05182.2-5"/>
    <property type="match status" value="1"/>
</dbReference>
<dbReference type="NCBIfam" id="TIGR02027">
    <property type="entry name" value="rpoA"/>
    <property type="match status" value="1"/>
</dbReference>
<dbReference type="Pfam" id="PF01000">
    <property type="entry name" value="RNA_pol_A_bac"/>
    <property type="match status" value="1"/>
</dbReference>
<dbReference type="Pfam" id="PF03118">
    <property type="entry name" value="RNA_pol_A_CTD"/>
    <property type="match status" value="1"/>
</dbReference>
<dbReference type="Pfam" id="PF01193">
    <property type="entry name" value="RNA_pol_L"/>
    <property type="match status" value="1"/>
</dbReference>
<dbReference type="SMART" id="SM00662">
    <property type="entry name" value="RPOLD"/>
    <property type="match status" value="1"/>
</dbReference>
<dbReference type="SUPFAM" id="SSF47789">
    <property type="entry name" value="C-terminal domain of RNA polymerase alpha subunit"/>
    <property type="match status" value="1"/>
</dbReference>
<dbReference type="SUPFAM" id="SSF56553">
    <property type="entry name" value="Insert subdomain of RNA polymerase alpha subunit"/>
    <property type="match status" value="1"/>
</dbReference>
<dbReference type="SUPFAM" id="SSF55257">
    <property type="entry name" value="RBP11-like subunits of RNA polymerase"/>
    <property type="match status" value="1"/>
</dbReference>
<protein>
    <recommendedName>
        <fullName evidence="1">DNA-directed RNA polymerase subunit alpha</fullName>
        <shortName evidence="1">RNAP subunit alpha</shortName>
        <ecNumber evidence="1">2.7.7.6</ecNumber>
    </recommendedName>
    <alternativeName>
        <fullName evidence="1">RNA polymerase subunit alpha</fullName>
    </alternativeName>
    <alternativeName>
        <fullName evidence="1">Transcriptase subunit alpha</fullName>
    </alternativeName>
</protein>
<comment type="function">
    <text evidence="1">DNA-dependent RNA polymerase catalyzes the transcription of DNA into RNA using the four ribonucleoside triphosphates as substrates.</text>
</comment>
<comment type="catalytic activity">
    <reaction evidence="1">
        <text>RNA(n) + a ribonucleoside 5'-triphosphate = RNA(n+1) + diphosphate</text>
        <dbReference type="Rhea" id="RHEA:21248"/>
        <dbReference type="Rhea" id="RHEA-COMP:14527"/>
        <dbReference type="Rhea" id="RHEA-COMP:17342"/>
        <dbReference type="ChEBI" id="CHEBI:33019"/>
        <dbReference type="ChEBI" id="CHEBI:61557"/>
        <dbReference type="ChEBI" id="CHEBI:140395"/>
        <dbReference type="EC" id="2.7.7.6"/>
    </reaction>
</comment>
<comment type="subunit">
    <text evidence="1">Homodimer. The RNAP catalytic core consists of 2 alpha, 1 beta, 1 beta' and 1 omega subunit. When a sigma factor is associated with the core the holoenzyme is formed, which can initiate transcription.</text>
</comment>
<comment type="domain">
    <text evidence="1">The N-terminal domain is essential for RNAP assembly and basal transcription, whereas the C-terminal domain is involved in interaction with transcriptional regulators and with upstream promoter elements.</text>
</comment>
<comment type="similarity">
    <text evidence="1">Belongs to the RNA polymerase alpha chain family.</text>
</comment>
<proteinExistence type="inferred from homology"/>
<gene>
    <name evidence="1" type="primary">rpoA</name>
    <name type="ordered locus">MSC_0721</name>
</gene>
<name>RPOA_MYCMS</name>
<feature type="chain" id="PRO_0000175339" description="DNA-directed RNA polymerase subunit alpha">
    <location>
        <begin position="1"/>
        <end position="317"/>
    </location>
</feature>
<feature type="region of interest" description="Alpha N-terminal domain (alpha-NTD)" evidence="1">
    <location>
        <begin position="1"/>
        <end position="234"/>
    </location>
</feature>
<feature type="region of interest" description="Alpha C-terminal domain (alpha-CTD)" evidence="1">
    <location>
        <begin position="250"/>
        <end position="317"/>
    </location>
</feature>
<accession>Q6MSP9</accession>
<sequence length="317" mass="35010">MKQFVRPEFILLKEGQDKNYGKFSVSPLERGFGITLGNAIRRTLLAATPGASVYAIKIAGATHEFTSIPGIIENVTKIILNIKQLVLKIDTSIYSDDEVVQLRIRSDIQGPIYAGDLDIPAGVEILNKDLLIATISEGGVLDLVLYAKNSRGYKTFKDNKNEKNIEPGMITIDSNYSPIIKVAYSVDSAKIGRAIDLEKLELEVTTDGSITAIDAISIASRILVAHLEFFIDLNREISVLEVIGTNQTDDKELDRTVEELDFTQRSLNCLKRAGINTLRELVSKNEDEIGSIRNLGRKSLKEIKDKVASLGLAFRQS</sequence>
<evidence type="ECO:0000255" key="1">
    <source>
        <dbReference type="HAMAP-Rule" id="MF_00059"/>
    </source>
</evidence>
<organism>
    <name type="scientific">Mycoplasma mycoides subsp. mycoides SC (strain CCUG 32753 / NCTC 10114 / PG1)</name>
    <dbReference type="NCBI Taxonomy" id="272632"/>
    <lineage>
        <taxon>Bacteria</taxon>
        <taxon>Bacillati</taxon>
        <taxon>Mycoplasmatota</taxon>
        <taxon>Mollicutes</taxon>
        <taxon>Mycoplasmataceae</taxon>
        <taxon>Mycoplasma</taxon>
    </lineage>
</organism>